<keyword id="KW-0067">ATP-binding</keyword>
<keyword id="KW-0106">Calcium</keyword>
<keyword id="KW-1003">Cell membrane</keyword>
<keyword id="KW-1015">Disulfide bond</keyword>
<keyword id="KW-0325">Glycoprotein</keyword>
<keyword id="KW-0378">Hydrolase</keyword>
<keyword id="KW-0472">Membrane</keyword>
<keyword id="KW-0479">Metal-binding</keyword>
<keyword id="KW-0511">Multifunctional enzyme</keyword>
<keyword id="KW-0547">Nucleotide-binding</keyword>
<keyword id="KW-1185">Reference proteome</keyword>
<keyword id="KW-0677">Repeat</keyword>
<keyword id="KW-0964">Secreted</keyword>
<keyword id="KW-0735">Signal-anchor</keyword>
<keyword id="KW-0812">Transmembrane</keyword>
<keyword id="KW-1133">Transmembrane helix</keyword>
<keyword id="KW-0862">Zinc</keyword>
<protein>
    <recommendedName>
        <fullName evidence="1">Ectonucleotide pyrophosphatase/phosphodiesterase family member 3</fullName>
        <shortName evidence="1">E-NPP 3</shortName>
    </recommendedName>
    <alternativeName>
        <fullName>Alkaline phosphodiesterase I</fullName>
        <ecNumber evidence="1">3.1.4.1</ecNumber>
    </alternativeName>
    <alternativeName>
        <fullName evidence="1">Dinucleoside polyphosphatase</fullName>
        <ecNumber evidence="1">3.6.1.-</ecNumber>
    </alternativeName>
    <alternativeName>
        <fullName evidence="1">Nucleotide diphosphatase</fullName>
    </alternativeName>
    <alternativeName>
        <fullName evidence="1">Nucleotide pyrophosphatase</fullName>
        <shortName evidence="1">NPPase</shortName>
        <ecNumber evidence="1">3.6.1.9</ecNumber>
    </alternativeName>
    <alternativeName>
        <fullName evidence="1">Phosphodiesterase I beta</fullName>
        <shortName evidence="1">PD-Ibeta</shortName>
    </alternativeName>
    <alternativeName>
        <fullName evidence="1">Phosphodiesterase I/nucleotide pyrophosphatase 3</fullName>
    </alternativeName>
    <cdAntigenName evidence="1">CD203c</cdAntigenName>
</protein>
<gene>
    <name evidence="1" type="primary">ENPP3</name>
</gene>
<sequence length="873" mass="99908">MESMLTLAMEQPVKRNTLKKYKIACIVLLALLVIVSLGLGLGLGLRKPEKQGSCRKKCFDASFRGLENCRCDVACKDRGDCCWDFEDTCVESTRIWMCNQFRCGETRLEASLCSCSDDCLQRKDCCADYKSVCQGETSWLEENCDTAQQSQCPEGFDLPPVILFSMDGFRAEYLHTWDTLMPNINKLKTCGIHSKYMRAMYPTKTFPNHYTIVMGLYPESHGIIDNNMYDVNLNKNFSLSSKEQNNPAWWHGQPMWLTAMYQGLKAATYFWPGSEAAINGSFPSIYMPYNGSVPFEERISTLLKWLDLPKAERPRFYTMYFEEPDFSGHAGGPVSARVIKALQIVDHAFGMLMEGLKQRNLHNCVNIILLADHGMEQTYCNKMEYMTDYFPRINFYMYEGPAPRIRAHSIPHDFFSFNSEEIVRNLSCRKPDQHFKPYLTPDLPKRLHYAKNVRIDKVHLFVDRQWLAVRSKSNTNCGGGNHGYNNEFRSMEAIFLAHGPSFKEKTEVEPFENIEVYNLMCDLLRIQPAPNNGTHGSLNHLLKVPFYEPSHAEEVSKFSVCGFANPLPAESDCLCPHLQNSIQLEQVNQMLNLTQEEITATVKVNLPFGRPRVLQKNVDHCLLYHREYVSGFGKAMRMPMWSSYTVPQLGDTSPLPPTVPDCLRADVRVPPSESQKCSFYLADKNITHGFLYPPASNRTSDSQYDALITSNLVPMYEEFTKMWDYFHSVLLIKHATERNGVNVVSGPIFDYNYDGHFDAPDEITKHLANTDVPIPTHYFVVLTSCKNKSHTPENCPGWLDVLPFIIPHRPTNMESCPEGKPEALWVEERFTAHIARVRDVELLTGLDFYQEKVQPVSEILQLKTYLPTFETTI</sequence>
<comment type="function">
    <text evidence="1 4">Hydrolase that metabolizes extracellular nucleotides, including ATP, GTP, UTP and CTP (By similarity). Limits mast cells and basophils response during inflammation and during the chronic phases of allergic responses by eliminating extracellular ATP, a signaling molecule activating these cells in an autocrine manner. Metabolizes extracellular ATP in the lumen of the small intestine, and thereby prevents ATP-induced apoptosis of intestinal plasmacytoid dendritic cells (By similarity). Has a broad specificity and can also hydrolyze UDP-GlcNAc into UMP and GlcNAc-1-phosphate and potentially several other intracellular nucleotide sugars, including UDP-GalNAc, CMP-NeuAc, GDP-Fuc, and UDP-GlcA. Thereby, could modulate glycan biosynthesis and protein glycosylation (By similarity). Can hydrolyze extracellular dinucleoside polyphosphates, including the vasoactive adenosine polyphosphates as well. In addition, displays an alkaline phosphodiesterase activity in vitro (By similarity).</text>
</comment>
<comment type="catalytic activity">
    <reaction evidence="1">
        <text>a ribonucleoside 5'-triphosphate + H2O = a ribonucleoside 5'-phosphate + diphosphate + H(+)</text>
        <dbReference type="Rhea" id="RHEA:23996"/>
        <dbReference type="ChEBI" id="CHEBI:15377"/>
        <dbReference type="ChEBI" id="CHEBI:15378"/>
        <dbReference type="ChEBI" id="CHEBI:33019"/>
        <dbReference type="ChEBI" id="CHEBI:58043"/>
        <dbReference type="ChEBI" id="CHEBI:61557"/>
        <dbReference type="EC" id="3.6.1.9"/>
    </reaction>
    <physiologicalReaction direction="left-to-right" evidence="1">
        <dbReference type="Rhea" id="RHEA:23997"/>
    </physiologicalReaction>
</comment>
<comment type="catalytic activity">
    <reaction evidence="1">
        <text>ATP + H2O = AMP + diphosphate + H(+)</text>
        <dbReference type="Rhea" id="RHEA:14245"/>
        <dbReference type="ChEBI" id="CHEBI:15377"/>
        <dbReference type="ChEBI" id="CHEBI:15378"/>
        <dbReference type="ChEBI" id="CHEBI:30616"/>
        <dbReference type="ChEBI" id="CHEBI:33019"/>
        <dbReference type="ChEBI" id="CHEBI:456215"/>
        <dbReference type="EC" id="3.6.1.9"/>
    </reaction>
    <physiologicalReaction direction="left-to-right" evidence="1">
        <dbReference type="Rhea" id="RHEA:14246"/>
    </physiologicalReaction>
</comment>
<comment type="catalytic activity">
    <reaction evidence="1">
        <text>CTP + H2O = CMP + diphosphate + H(+)</text>
        <dbReference type="Rhea" id="RHEA:27762"/>
        <dbReference type="ChEBI" id="CHEBI:15377"/>
        <dbReference type="ChEBI" id="CHEBI:15378"/>
        <dbReference type="ChEBI" id="CHEBI:33019"/>
        <dbReference type="ChEBI" id="CHEBI:37563"/>
        <dbReference type="ChEBI" id="CHEBI:60377"/>
        <dbReference type="EC" id="3.6.1.9"/>
    </reaction>
    <physiologicalReaction direction="left-to-right" evidence="1">
        <dbReference type="Rhea" id="RHEA:27763"/>
    </physiologicalReaction>
</comment>
<comment type="catalytic activity">
    <reaction evidence="1">
        <text>GTP + H2O = GMP + diphosphate + H(+)</text>
        <dbReference type="Rhea" id="RHEA:29391"/>
        <dbReference type="ChEBI" id="CHEBI:15377"/>
        <dbReference type="ChEBI" id="CHEBI:15378"/>
        <dbReference type="ChEBI" id="CHEBI:33019"/>
        <dbReference type="ChEBI" id="CHEBI:37565"/>
        <dbReference type="ChEBI" id="CHEBI:58115"/>
        <dbReference type="EC" id="3.6.1.9"/>
    </reaction>
    <physiologicalReaction direction="left-to-right" evidence="1">
        <dbReference type="Rhea" id="RHEA:29392"/>
    </physiologicalReaction>
</comment>
<comment type="catalytic activity">
    <reaction evidence="1">
        <text>UTP + H2O = UMP + diphosphate + H(+)</text>
        <dbReference type="Rhea" id="RHEA:29395"/>
        <dbReference type="ChEBI" id="CHEBI:15377"/>
        <dbReference type="ChEBI" id="CHEBI:15378"/>
        <dbReference type="ChEBI" id="CHEBI:33019"/>
        <dbReference type="ChEBI" id="CHEBI:46398"/>
        <dbReference type="ChEBI" id="CHEBI:57865"/>
        <dbReference type="EC" id="3.6.1.9"/>
    </reaction>
    <physiologicalReaction direction="left-to-right" evidence="1">
        <dbReference type="Rhea" id="RHEA:29396"/>
    </physiologicalReaction>
</comment>
<comment type="catalytic activity">
    <reaction evidence="4">
        <text>UDP-N-acetyl-alpha-D-glucosamine + H2O = N-acetyl-alpha-D-glucosamine 1-phosphate + UMP + 2 H(+)</text>
        <dbReference type="Rhea" id="RHEA:29547"/>
        <dbReference type="ChEBI" id="CHEBI:15377"/>
        <dbReference type="ChEBI" id="CHEBI:15378"/>
        <dbReference type="ChEBI" id="CHEBI:57705"/>
        <dbReference type="ChEBI" id="CHEBI:57776"/>
        <dbReference type="ChEBI" id="CHEBI:57865"/>
    </reaction>
    <physiologicalReaction direction="left-to-right" evidence="4">
        <dbReference type="Rhea" id="RHEA:29548"/>
    </physiologicalReaction>
</comment>
<comment type="catalytic activity">
    <reaction evidence="1">
        <text>P(1),P(3)-bis(5'-adenosyl) triphosphate + H2O = AMP + ADP + 2 H(+)</text>
        <dbReference type="Rhea" id="RHEA:13893"/>
        <dbReference type="ChEBI" id="CHEBI:15377"/>
        <dbReference type="ChEBI" id="CHEBI:15378"/>
        <dbReference type="ChEBI" id="CHEBI:58529"/>
        <dbReference type="ChEBI" id="CHEBI:456215"/>
        <dbReference type="ChEBI" id="CHEBI:456216"/>
    </reaction>
    <physiologicalReaction direction="left-to-right" evidence="1">
        <dbReference type="Rhea" id="RHEA:13894"/>
    </physiologicalReaction>
</comment>
<comment type="catalytic activity">
    <reaction evidence="1">
        <text>P(1),P(4)-bis(5'-adenosyl) tetraphosphate + H2O = AMP + ATP + 2 H(+)</text>
        <dbReference type="Rhea" id="RHEA:32039"/>
        <dbReference type="ChEBI" id="CHEBI:15377"/>
        <dbReference type="ChEBI" id="CHEBI:15378"/>
        <dbReference type="ChEBI" id="CHEBI:30616"/>
        <dbReference type="ChEBI" id="CHEBI:58141"/>
        <dbReference type="ChEBI" id="CHEBI:456215"/>
    </reaction>
    <physiologicalReaction direction="left-to-right" evidence="1">
        <dbReference type="Rhea" id="RHEA:32040"/>
    </physiologicalReaction>
</comment>
<comment type="catalytic activity">
    <reaction evidence="1">
        <text>P(1),P(5)-bis(5'-adenosyl) pentaphosphate + H2O = adenosine 5'-tetraphosphate + AMP + 2 H(+)</text>
        <dbReference type="Rhea" id="RHEA:32051"/>
        <dbReference type="ChEBI" id="CHEBI:15377"/>
        <dbReference type="ChEBI" id="CHEBI:15378"/>
        <dbReference type="ChEBI" id="CHEBI:58450"/>
        <dbReference type="ChEBI" id="CHEBI:62041"/>
        <dbReference type="ChEBI" id="CHEBI:456215"/>
    </reaction>
    <physiologicalReaction direction="left-to-right" evidence="1">
        <dbReference type="Rhea" id="RHEA:32052"/>
    </physiologicalReaction>
</comment>
<comment type="catalytic activity">
    <reaction evidence="1">
        <text>P(1),P(4)-bis(5'-guanosyl) tetraphosphate + H2O = GMP + GTP + 2 H(+)</text>
        <dbReference type="Rhea" id="RHEA:22484"/>
        <dbReference type="ChEBI" id="CHEBI:15377"/>
        <dbReference type="ChEBI" id="CHEBI:15378"/>
        <dbReference type="ChEBI" id="CHEBI:37565"/>
        <dbReference type="ChEBI" id="CHEBI:57553"/>
        <dbReference type="ChEBI" id="CHEBI:58115"/>
    </reaction>
</comment>
<comment type="catalytic activity">
    <reaction evidence="1">
        <text>Hydrolytically removes 5'-nucleotides successively from the 3'-hydroxy termini of 3'-hydroxy-terminated oligonucleotides.</text>
        <dbReference type="EC" id="3.1.4.1"/>
    </reaction>
</comment>
<comment type="cofactor">
    <cofactor evidence="1">
        <name>Zn(2+)</name>
        <dbReference type="ChEBI" id="CHEBI:29105"/>
    </cofactor>
    <text evidence="1">Binds 2 zinc ions per subunit.</text>
</comment>
<comment type="subunit">
    <text evidence="1">Monomer and homodimer.</text>
</comment>
<comment type="subcellular location">
    <subcellularLocation>
        <location evidence="1">Cell membrane</location>
        <topology evidence="1">Single-pass type II membrane protein</topology>
    </subcellularLocation>
    <subcellularLocation>
        <location evidence="1">Apical cell membrane</location>
        <topology evidence="1">Single-pass type II membrane protein</topology>
    </subcellularLocation>
    <subcellularLocation>
        <location evidence="1">Secreted</location>
    </subcellularLocation>
    <text evidence="1">Detected at the cell surface of basophils. Detected at the apical plasma membrane of bile duct cells. Located to the apical surface in intestinal and kidney epithelial cells. Secreted in serum, and in lumen of epithelial cells.</text>
</comment>
<comment type="PTM">
    <text evidence="3">N-glycosylated. N-glycosylation is necessary for normal transport to the cell membrane, but is not the apical targeting signal.</text>
</comment>
<name>ENPP3_PONAB</name>
<feature type="chain" id="PRO_0000282961" description="Ectonucleotide pyrophosphatase/phosphodiesterase family member 3">
    <location>
        <begin position="1"/>
        <end position="873"/>
    </location>
</feature>
<feature type="topological domain" description="Cytoplasmic" evidence="5">
    <location>
        <begin position="1"/>
        <end position="11"/>
    </location>
</feature>
<feature type="transmembrane region" description="Helical; Signal-anchor for type II membrane protein" evidence="5">
    <location>
        <begin position="12"/>
        <end position="30"/>
    </location>
</feature>
<feature type="topological domain" description="Extracellular" evidence="5">
    <location>
        <begin position="31"/>
        <end position="873"/>
    </location>
</feature>
<feature type="domain" description="SMB 1" evidence="6">
    <location>
        <begin position="51"/>
        <end position="93"/>
    </location>
</feature>
<feature type="domain" description="SMB 2" evidence="6">
    <location>
        <begin position="94"/>
        <end position="138"/>
    </location>
</feature>
<feature type="region of interest" description="Phosphodiesterase" evidence="1">
    <location>
        <begin position="160"/>
        <end position="544"/>
    </location>
</feature>
<feature type="region of interest" description="Nuclease" evidence="1">
    <location>
        <begin position="580"/>
        <end position="873"/>
    </location>
</feature>
<feature type="short sequence motif" description="Cell attachment site" evidence="5">
    <location>
        <begin position="78"/>
        <end position="80"/>
    </location>
</feature>
<feature type="active site" description="Nucleophile" evidence="2">
    <location>
        <position position="205"/>
    </location>
</feature>
<feature type="binding site" evidence="1">
    <location>
        <position position="167"/>
    </location>
    <ligand>
        <name>Zn(2+)</name>
        <dbReference type="ChEBI" id="CHEBI:29105"/>
        <label>1</label>
        <note>catalytic</note>
    </ligand>
</feature>
<feature type="binding site" evidence="1">
    <location>
        <position position="204"/>
    </location>
    <ligand>
        <name>ATP</name>
        <dbReference type="ChEBI" id="CHEBI:30616"/>
    </ligand>
</feature>
<feature type="binding site" evidence="1">
    <location>
        <position position="205"/>
    </location>
    <ligand>
        <name>Zn(2+)</name>
        <dbReference type="ChEBI" id="CHEBI:29105"/>
        <label>1</label>
        <note>catalytic</note>
    </ligand>
</feature>
<feature type="binding site" evidence="1">
    <location>
        <position position="226"/>
    </location>
    <ligand>
        <name>ATP</name>
        <dbReference type="ChEBI" id="CHEBI:30616"/>
    </ligand>
</feature>
<feature type="binding site" evidence="1">
    <location>
        <position position="275"/>
    </location>
    <ligand>
        <name>ATP</name>
        <dbReference type="ChEBI" id="CHEBI:30616"/>
    </ligand>
</feature>
<feature type="binding site" evidence="1">
    <location>
        <position position="289"/>
    </location>
    <ligand>
        <name>ATP</name>
        <dbReference type="ChEBI" id="CHEBI:30616"/>
    </ligand>
</feature>
<feature type="binding site" evidence="1">
    <location>
        <position position="325"/>
    </location>
    <ligand>
        <name>Zn(2+)</name>
        <dbReference type="ChEBI" id="CHEBI:29105"/>
        <label>2</label>
        <note>catalytic</note>
    </ligand>
</feature>
<feature type="binding site" evidence="1">
    <location>
        <position position="329"/>
    </location>
    <ligand>
        <name>Zn(2+)</name>
        <dbReference type="ChEBI" id="CHEBI:29105"/>
        <label>2</label>
        <note>catalytic</note>
    </ligand>
</feature>
<feature type="binding site" evidence="1">
    <location>
        <position position="372"/>
    </location>
    <ligand>
        <name>Zn(2+)</name>
        <dbReference type="ChEBI" id="CHEBI:29105"/>
        <label>1</label>
        <note>catalytic</note>
    </ligand>
</feature>
<feature type="binding site" evidence="1">
    <location>
        <position position="373"/>
    </location>
    <ligand>
        <name>Zn(2+)</name>
        <dbReference type="ChEBI" id="CHEBI:29105"/>
        <label>1</label>
        <note>catalytic</note>
    </ligand>
</feature>
<feature type="binding site" evidence="1">
    <location>
        <position position="482"/>
    </location>
    <ligand>
        <name>Zn(2+)</name>
        <dbReference type="ChEBI" id="CHEBI:29105"/>
        <label>2</label>
        <note>catalytic</note>
    </ligand>
</feature>
<feature type="binding site" evidence="1">
    <location>
        <position position="750"/>
    </location>
    <ligand>
        <name>Ca(2+)</name>
        <dbReference type="ChEBI" id="CHEBI:29108"/>
    </ligand>
</feature>
<feature type="binding site" evidence="1">
    <location>
        <position position="752"/>
    </location>
    <ligand>
        <name>Ca(2+)</name>
        <dbReference type="ChEBI" id="CHEBI:29108"/>
    </ligand>
</feature>
<feature type="binding site" evidence="1">
    <location>
        <position position="754"/>
    </location>
    <ligand>
        <name>Ca(2+)</name>
        <dbReference type="ChEBI" id="CHEBI:29108"/>
    </ligand>
</feature>
<feature type="binding site" evidence="1">
    <location>
        <position position="756"/>
    </location>
    <ligand>
        <name>Ca(2+)</name>
        <dbReference type="ChEBI" id="CHEBI:29108"/>
    </ligand>
</feature>
<feature type="binding site" evidence="1">
    <location>
        <position position="758"/>
    </location>
    <ligand>
        <name>Ca(2+)</name>
        <dbReference type="ChEBI" id="CHEBI:29108"/>
    </ligand>
</feature>
<feature type="glycosylation site" description="N-linked (GlcNAc...) asparagine" evidence="5">
    <location>
        <position position="236"/>
    </location>
</feature>
<feature type="glycosylation site" description="N-linked (GlcNAc...) asparagine" evidence="5">
    <location>
        <position position="279"/>
    </location>
</feature>
<feature type="glycosylation site" description="N-linked (GlcNAc...) asparagine" evidence="5">
    <location>
        <position position="290"/>
    </location>
</feature>
<feature type="glycosylation site" description="N-linked (GlcNAc...) asparagine" evidence="5">
    <location>
        <position position="425"/>
    </location>
</feature>
<feature type="glycosylation site" description="N-linked (GlcNAc...) asparagine" evidence="5">
    <location>
        <position position="532"/>
    </location>
</feature>
<feature type="glycosylation site" description="N-linked (GlcNAc...) asparagine" evidence="5">
    <location>
        <position position="592"/>
    </location>
</feature>
<feature type="glycosylation site" description="N-linked (GlcNAc...) asparagine" evidence="5">
    <location>
        <position position="685"/>
    </location>
</feature>
<feature type="glycosylation site" description="N-linked (GlcNAc...) asparagine" evidence="5">
    <location>
        <position position="697"/>
    </location>
</feature>
<feature type="glycosylation site" description="N-linked (GlcNAc...) asparagine" evidence="5">
    <location>
        <position position="787"/>
    </location>
</feature>
<feature type="disulfide bond" evidence="1">
    <location>
        <begin position="54"/>
        <end position="71"/>
    </location>
</feature>
<feature type="disulfide bond" evidence="1">
    <location>
        <begin position="58"/>
        <end position="89"/>
    </location>
</feature>
<feature type="disulfide bond" evidence="1">
    <location>
        <begin position="69"/>
        <end position="82"/>
    </location>
</feature>
<feature type="disulfide bond" evidence="1">
    <location>
        <begin position="75"/>
        <end position="81"/>
    </location>
</feature>
<feature type="disulfide bond" evidence="1">
    <location>
        <begin position="98"/>
        <end position="115"/>
    </location>
</feature>
<feature type="disulfide bond" evidence="1">
    <location>
        <begin position="103"/>
        <end position="133"/>
    </location>
</feature>
<feature type="disulfide bond" evidence="1">
    <location>
        <begin position="113"/>
        <end position="126"/>
    </location>
</feature>
<feature type="disulfide bond" evidence="1">
    <location>
        <begin position="119"/>
        <end position="125"/>
    </location>
</feature>
<feature type="disulfide bond" evidence="1">
    <location>
        <begin position="144"/>
        <end position="190"/>
    </location>
</feature>
<feature type="disulfide bond" evidence="1">
    <location>
        <begin position="152"/>
        <end position="364"/>
    </location>
</feature>
<feature type="disulfide bond" evidence="1">
    <location>
        <begin position="380"/>
        <end position="477"/>
    </location>
</feature>
<feature type="disulfide bond" evidence="1">
    <location>
        <begin position="428"/>
        <end position="816"/>
    </location>
</feature>
<feature type="disulfide bond" evidence="1">
    <location>
        <begin position="561"/>
        <end position="621"/>
    </location>
</feature>
<feature type="disulfide bond" evidence="1">
    <location>
        <begin position="573"/>
        <end position="677"/>
    </location>
</feature>
<feature type="disulfide bond" evidence="1">
    <location>
        <begin position="575"/>
        <end position="662"/>
    </location>
</feature>
<feature type="disulfide bond" evidence="1">
    <location>
        <begin position="785"/>
        <end position="795"/>
    </location>
</feature>
<proteinExistence type="evidence at transcript level"/>
<reference key="1">
    <citation type="submission" date="2004-11" db="EMBL/GenBank/DDBJ databases">
        <authorList>
            <consortium name="The German cDNA consortium"/>
        </authorList>
    </citation>
    <scope>NUCLEOTIDE SEQUENCE [LARGE SCALE MRNA]</scope>
    <source>
        <tissue>Kidney</tissue>
    </source>
</reference>
<organism>
    <name type="scientific">Pongo abelii</name>
    <name type="common">Sumatran orangutan</name>
    <name type="synonym">Pongo pygmaeus abelii</name>
    <dbReference type="NCBI Taxonomy" id="9601"/>
    <lineage>
        <taxon>Eukaryota</taxon>
        <taxon>Metazoa</taxon>
        <taxon>Chordata</taxon>
        <taxon>Craniata</taxon>
        <taxon>Vertebrata</taxon>
        <taxon>Euteleostomi</taxon>
        <taxon>Mammalia</taxon>
        <taxon>Eutheria</taxon>
        <taxon>Euarchontoglires</taxon>
        <taxon>Primates</taxon>
        <taxon>Haplorrhini</taxon>
        <taxon>Catarrhini</taxon>
        <taxon>Hominidae</taxon>
        <taxon>Pongo</taxon>
    </lineage>
</organism>
<evidence type="ECO:0000250" key="1">
    <source>
        <dbReference type="UniProtKB" id="O14638"/>
    </source>
</evidence>
<evidence type="ECO:0000250" key="2">
    <source>
        <dbReference type="UniProtKB" id="P15396"/>
    </source>
</evidence>
<evidence type="ECO:0000250" key="3">
    <source>
        <dbReference type="UniProtKB" id="P97675"/>
    </source>
</evidence>
<evidence type="ECO:0000250" key="4">
    <source>
        <dbReference type="UniProtKB" id="Q6DYE8"/>
    </source>
</evidence>
<evidence type="ECO:0000255" key="5"/>
<evidence type="ECO:0000255" key="6">
    <source>
        <dbReference type="PROSITE-ProRule" id="PRU00350"/>
    </source>
</evidence>
<dbReference type="EC" id="3.1.4.1" evidence="1"/>
<dbReference type="EC" id="3.6.1.-" evidence="1"/>
<dbReference type="EC" id="3.6.1.9" evidence="1"/>
<dbReference type="EMBL" id="CR860832">
    <property type="protein sequence ID" value="CAH92941.1"/>
    <property type="molecule type" value="mRNA"/>
</dbReference>
<dbReference type="RefSeq" id="NP_001126732.1">
    <property type="nucleotide sequence ID" value="NM_001133260.1"/>
</dbReference>
<dbReference type="SMR" id="Q5R5M5"/>
<dbReference type="FunCoup" id="Q5R5M5">
    <property type="interactions" value="307"/>
</dbReference>
<dbReference type="STRING" id="9601.ENSPPYP00000019047"/>
<dbReference type="GlyCosmos" id="Q5R5M5">
    <property type="glycosylation" value="9 sites, No reported glycans"/>
</dbReference>
<dbReference type="GeneID" id="100173734"/>
<dbReference type="KEGG" id="pon:100173734"/>
<dbReference type="CTD" id="5169"/>
<dbReference type="InParanoid" id="Q5R5M5"/>
<dbReference type="OrthoDB" id="415411at2759"/>
<dbReference type="Proteomes" id="UP000001595">
    <property type="component" value="Unplaced"/>
</dbReference>
<dbReference type="GO" id="GO:0016324">
    <property type="term" value="C:apical plasma membrane"/>
    <property type="evidence" value="ECO:0007669"/>
    <property type="project" value="UniProtKB-SubCell"/>
</dbReference>
<dbReference type="GO" id="GO:0009897">
    <property type="term" value="C:external side of plasma membrane"/>
    <property type="evidence" value="ECO:0000250"/>
    <property type="project" value="UniProtKB"/>
</dbReference>
<dbReference type="GO" id="GO:0005576">
    <property type="term" value="C:extracellular region"/>
    <property type="evidence" value="ECO:0007669"/>
    <property type="project" value="UniProtKB-SubCell"/>
</dbReference>
<dbReference type="GO" id="GO:0005886">
    <property type="term" value="C:plasma membrane"/>
    <property type="evidence" value="ECO:0000250"/>
    <property type="project" value="UniProtKB"/>
</dbReference>
<dbReference type="GO" id="GO:0005524">
    <property type="term" value="F:ATP binding"/>
    <property type="evidence" value="ECO:0007669"/>
    <property type="project" value="UniProtKB-KW"/>
</dbReference>
<dbReference type="GO" id="GO:0047693">
    <property type="term" value="F:ATP diphosphatase activity"/>
    <property type="evidence" value="ECO:0007669"/>
    <property type="project" value="RHEA"/>
</dbReference>
<dbReference type="GO" id="GO:0034432">
    <property type="term" value="F:bis(5'-adenosyl)-pentaphosphatase activity"/>
    <property type="evidence" value="ECO:0000250"/>
    <property type="project" value="UniProtKB"/>
</dbReference>
<dbReference type="GO" id="GO:0047710">
    <property type="term" value="F:bis(5'-adenosyl)-triphosphatase activity"/>
    <property type="evidence" value="ECO:0000250"/>
    <property type="project" value="UniProtKB"/>
</dbReference>
<dbReference type="GO" id="GO:0004081">
    <property type="term" value="F:bis(5'-nucleosyl)-tetraphosphatase (asymmetrical) activity"/>
    <property type="evidence" value="ECO:0000250"/>
    <property type="project" value="UniProtKB"/>
</dbReference>
<dbReference type="GO" id="GO:0005509">
    <property type="term" value="F:calcium ion binding"/>
    <property type="evidence" value="ECO:0000250"/>
    <property type="project" value="UniProtKB"/>
</dbReference>
<dbReference type="GO" id="GO:0036219">
    <property type="term" value="F:GTP diphosphatase activity"/>
    <property type="evidence" value="ECO:0007669"/>
    <property type="project" value="RHEA"/>
</dbReference>
<dbReference type="GO" id="GO:0003676">
    <property type="term" value="F:nucleic acid binding"/>
    <property type="evidence" value="ECO:0007669"/>
    <property type="project" value="InterPro"/>
</dbReference>
<dbReference type="GO" id="GO:0047429">
    <property type="term" value="F:nucleoside triphosphate diphosphatase activity"/>
    <property type="evidence" value="ECO:0000250"/>
    <property type="project" value="UniProtKB"/>
</dbReference>
<dbReference type="GO" id="GO:0004528">
    <property type="term" value="F:phosphodiesterase I activity"/>
    <property type="evidence" value="ECO:0000250"/>
    <property type="project" value="UniProtKB"/>
</dbReference>
<dbReference type="GO" id="GO:0036221">
    <property type="term" value="F:UTP diphosphatase activity"/>
    <property type="evidence" value="ECO:0007669"/>
    <property type="project" value="RHEA"/>
</dbReference>
<dbReference type="GO" id="GO:0008270">
    <property type="term" value="F:zinc ion binding"/>
    <property type="evidence" value="ECO:0000250"/>
    <property type="project" value="UniProtKB"/>
</dbReference>
<dbReference type="GO" id="GO:0046034">
    <property type="term" value="P:ATP metabolic process"/>
    <property type="evidence" value="ECO:0000250"/>
    <property type="project" value="UniProtKB"/>
</dbReference>
<dbReference type="GO" id="GO:0002276">
    <property type="term" value="P:basophil activation involved in immune response"/>
    <property type="evidence" value="ECO:0000250"/>
    <property type="project" value="UniProtKB"/>
</dbReference>
<dbReference type="GO" id="GO:0050728">
    <property type="term" value="P:negative regulation of inflammatory response"/>
    <property type="evidence" value="ECO:0000250"/>
    <property type="project" value="UniProtKB"/>
</dbReference>
<dbReference type="GO" id="GO:0033007">
    <property type="term" value="P:negative regulation of mast cell activation involved in immune response"/>
    <property type="evidence" value="ECO:0000250"/>
    <property type="project" value="UniProtKB"/>
</dbReference>
<dbReference type="GO" id="GO:0070667">
    <property type="term" value="P:negative regulation of mast cell proliferation"/>
    <property type="evidence" value="ECO:0000250"/>
    <property type="project" value="UniProtKB"/>
</dbReference>
<dbReference type="GO" id="GO:0009143">
    <property type="term" value="P:nucleoside triphosphate catabolic process"/>
    <property type="evidence" value="ECO:0007669"/>
    <property type="project" value="TreeGrafter"/>
</dbReference>
<dbReference type="GO" id="GO:0006220">
    <property type="term" value="P:pyrimidine nucleotide metabolic process"/>
    <property type="evidence" value="ECO:0000250"/>
    <property type="project" value="UniProtKB"/>
</dbReference>
<dbReference type="CDD" id="cd16018">
    <property type="entry name" value="Enpp"/>
    <property type="match status" value="1"/>
</dbReference>
<dbReference type="CDD" id="cd00091">
    <property type="entry name" value="NUC"/>
    <property type="match status" value="1"/>
</dbReference>
<dbReference type="FunFam" id="3.40.720.10:FF:000010">
    <property type="entry name" value="Ectonucleotide pyrophosphatase/phosphodiesterase family member 1"/>
    <property type="match status" value="1"/>
</dbReference>
<dbReference type="FunFam" id="4.10.410.20:FF:000001">
    <property type="entry name" value="Ectonucleotide pyrophosphatase/phosphodiesterase family member 2"/>
    <property type="match status" value="1"/>
</dbReference>
<dbReference type="FunFam" id="3.40.570.10:FF:000005">
    <property type="entry name" value="ectonucleotide pyrophosphatase/phosphodiesterase family member 3"/>
    <property type="match status" value="1"/>
</dbReference>
<dbReference type="FunFam" id="4.10.410.20:FF:000004">
    <property type="entry name" value="ectonucleotide pyrophosphatase/phosphodiesterase family member 3"/>
    <property type="match status" value="1"/>
</dbReference>
<dbReference type="Gene3D" id="4.10.410.20">
    <property type="match status" value="2"/>
</dbReference>
<dbReference type="Gene3D" id="3.40.720.10">
    <property type="entry name" value="Alkaline Phosphatase, subunit A"/>
    <property type="match status" value="1"/>
</dbReference>
<dbReference type="Gene3D" id="3.40.570.10">
    <property type="entry name" value="Extracellular Endonuclease, subunit A"/>
    <property type="match status" value="1"/>
</dbReference>
<dbReference type="InterPro" id="IPR017850">
    <property type="entry name" value="Alkaline_phosphatase_core_sf"/>
</dbReference>
<dbReference type="InterPro" id="IPR044929">
    <property type="entry name" value="DNA/RNA_non-sp_Endonuclease_sf"/>
</dbReference>
<dbReference type="InterPro" id="IPR001604">
    <property type="entry name" value="Endo_G_ENPP1-like_dom"/>
</dbReference>
<dbReference type="InterPro" id="IPR020821">
    <property type="entry name" value="ENPP1-3/EXOG-like_nuc-like"/>
</dbReference>
<dbReference type="InterPro" id="IPR044925">
    <property type="entry name" value="His-Me_finger_sf"/>
</dbReference>
<dbReference type="InterPro" id="IPR002591">
    <property type="entry name" value="Phosphodiest/P_Trfase"/>
</dbReference>
<dbReference type="InterPro" id="IPR036024">
    <property type="entry name" value="Somatomedin_B-like_dom_sf"/>
</dbReference>
<dbReference type="InterPro" id="IPR001212">
    <property type="entry name" value="Somatomedin_B_dom"/>
</dbReference>
<dbReference type="PANTHER" id="PTHR10151">
    <property type="entry name" value="ECTONUCLEOTIDE PYROPHOSPHATASE/PHOSPHODIESTERASE"/>
    <property type="match status" value="1"/>
</dbReference>
<dbReference type="PANTHER" id="PTHR10151:SF107">
    <property type="entry name" value="ECTONUCLEOTIDE PYROPHOSPHATASE_PHOSPHODIESTERASE FAMILY MEMBER 3"/>
    <property type="match status" value="1"/>
</dbReference>
<dbReference type="Pfam" id="PF01663">
    <property type="entry name" value="Phosphodiest"/>
    <property type="match status" value="1"/>
</dbReference>
<dbReference type="Pfam" id="PF01033">
    <property type="entry name" value="Somatomedin_B"/>
    <property type="match status" value="2"/>
</dbReference>
<dbReference type="SMART" id="SM00892">
    <property type="entry name" value="Endonuclease_NS"/>
    <property type="match status" value="1"/>
</dbReference>
<dbReference type="SMART" id="SM00477">
    <property type="entry name" value="NUC"/>
    <property type="match status" value="1"/>
</dbReference>
<dbReference type="SMART" id="SM00201">
    <property type="entry name" value="SO"/>
    <property type="match status" value="2"/>
</dbReference>
<dbReference type="SUPFAM" id="SSF53649">
    <property type="entry name" value="Alkaline phosphatase-like"/>
    <property type="match status" value="1"/>
</dbReference>
<dbReference type="SUPFAM" id="SSF54060">
    <property type="entry name" value="His-Me finger endonucleases"/>
    <property type="match status" value="1"/>
</dbReference>
<dbReference type="SUPFAM" id="SSF90188">
    <property type="entry name" value="Somatomedin B domain"/>
    <property type="match status" value="2"/>
</dbReference>
<dbReference type="PROSITE" id="PS00524">
    <property type="entry name" value="SMB_1"/>
    <property type="match status" value="2"/>
</dbReference>
<dbReference type="PROSITE" id="PS50958">
    <property type="entry name" value="SMB_2"/>
    <property type="match status" value="2"/>
</dbReference>
<accession>Q5R5M5</accession>